<name>RSUA_YERPE</name>
<accession>Q8ZGM2</accession>
<accession>Q0WHE3</accession>
<proteinExistence type="inferred from homology"/>
<comment type="function">
    <text evidence="1">Responsible for synthesis of pseudouridine from uracil-516 in 16S ribosomal RNA.</text>
</comment>
<comment type="catalytic activity">
    <reaction>
        <text>uridine(516) in 16S rRNA = pseudouridine(516) in 16S rRNA</text>
        <dbReference type="Rhea" id="RHEA:38867"/>
        <dbReference type="Rhea" id="RHEA-COMP:10089"/>
        <dbReference type="Rhea" id="RHEA-COMP:10090"/>
        <dbReference type="ChEBI" id="CHEBI:65314"/>
        <dbReference type="ChEBI" id="CHEBI:65315"/>
        <dbReference type="EC" id="5.4.99.19"/>
    </reaction>
</comment>
<comment type="subunit">
    <text evidence="1">Monomer.</text>
</comment>
<comment type="similarity">
    <text evidence="3">Belongs to the pseudouridine synthase RsuA family.</text>
</comment>
<feature type="chain" id="PRO_0000099978" description="Ribosomal small subunit pseudouridine synthase A">
    <location>
        <begin position="1"/>
        <end position="235"/>
    </location>
</feature>
<feature type="domain" description="S4 RNA-binding" evidence="2">
    <location>
        <begin position="1"/>
        <end position="68"/>
    </location>
</feature>
<feature type="active site" description="Nucleophile" evidence="1">
    <location>
        <position position="102"/>
    </location>
</feature>
<gene>
    <name type="primary">rsuA</name>
    <name type="ordered locus">YPO1266</name>
    <name type="ordered locus">y2917</name>
    <name type="ordered locus">YP_1322</name>
</gene>
<organism>
    <name type="scientific">Yersinia pestis</name>
    <dbReference type="NCBI Taxonomy" id="632"/>
    <lineage>
        <taxon>Bacteria</taxon>
        <taxon>Pseudomonadati</taxon>
        <taxon>Pseudomonadota</taxon>
        <taxon>Gammaproteobacteria</taxon>
        <taxon>Enterobacterales</taxon>
        <taxon>Yersiniaceae</taxon>
        <taxon>Yersinia</taxon>
    </lineage>
</organism>
<dbReference type="EC" id="5.4.99.19"/>
<dbReference type="EMBL" id="AL590842">
    <property type="protein sequence ID" value="CAL19923.1"/>
    <property type="molecule type" value="Genomic_DNA"/>
</dbReference>
<dbReference type="EMBL" id="AE009952">
    <property type="protein sequence ID" value="AAM86468.1"/>
    <property type="molecule type" value="Genomic_DNA"/>
</dbReference>
<dbReference type="EMBL" id="AE017042">
    <property type="protein sequence ID" value="AAS61565.1"/>
    <property type="molecule type" value="Genomic_DNA"/>
</dbReference>
<dbReference type="PIR" id="AI0154">
    <property type="entry name" value="AI0154"/>
</dbReference>
<dbReference type="RefSeq" id="WP_002208832.1">
    <property type="nucleotide sequence ID" value="NZ_WUCM01000013.1"/>
</dbReference>
<dbReference type="RefSeq" id="YP_002346295.1">
    <property type="nucleotide sequence ID" value="NC_003143.1"/>
</dbReference>
<dbReference type="SMR" id="Q8ZGM2"/>
<dbReference type="STRING" id="214092.YPO1266"/>
<dbReference type="PaxDb" id="214092-YPO1266"/>
<dbReference type="DNASU" id="1147864"/>
<dbReference type="EnsemblBacteria" id="AAS61565">
    <property type="protein sequence ID" value="AAS61565"/>
    <property type="gene ID" value="YP_1322"/>
</dbReference>
<dbReference type="GeneID" id="57977403"/>
<dbReference type="KEGG" id="ype:YPO1266"/>
<dbReference type="KEGG" id="ypk:y2917"/>
<dbReference type="KEGG" id="ypm:YP_1322"/>
<dbReference type="PATRIC" id="fig|214092.21.peg.1571"/>
<dbReference type="eggNOG" id="COG1187">
    <property type="taxonomic scope" value="Bacteria"/>
</dbReference>
<dbReference type="HOGENOM" id="CLU_024979_1_2_6"/>
<dbReference type="OMA" id="QGKYHQV"/>
<dbReference type="OrthoDB" id="9807213at2"/>
<dbReference type="Proteomes" id="UP000000815">
    <property type="component" value="Chromosome"/>
</dbReference>
<dbReference type="Proteomes" id="UP000001019">
    <property type="component" value="Chromosome"/>
</dbReference>
<dbReference type="Proteomes" id="UP000002490">
    <property type="component" value="Chromosome"/>
</dbReference>
<dbReference type="GO" id="GO:0005829">
    <property type="term" value="C:cytosol"/>
    <property type="evidence" value="ECO:0000318"/>
    <property type="project" value="GO_Central"/>
</dbReference>
<dbReference type="GO" id="GO:0160136">
    <property type="term" value="F:16S rRNA pseudouridine(516) synthase activity"/>
    <property type="evidence" value="ECO:0007669"/>
    <property type="project" value="UniProtKB-EC"/>
</dbReference>
<dbReference type="GO" id="GO:0009982">
    <property type="term" value="F:pseudouridine synthase activity"/>
    <property type="evidence" value="ECO:0000318"/>
    <property type="project" value="GO_Central"/>
</dbReference>
<dbReference type="GO" id="GO:0003723">
    <property type="term" value="F:RNA binding"/>
    <property type="evidence" value="ECO:0007669"/>
    <property type="project" value="UniProtKB-KW"/>
</dbReference>
<dbReference type="GO" id="GO:0000455">
    <property type="term" value="P:enzyme-directed rRNA pseudouridine synthesis"/>
    <property type="evidence" value="ECO:0000318"/>
    <property type="project" value="GO_Central"/>
</dbReference>
<dbReference type="CDD" id="cd02553">
    <property type="entry name" value="PseudoU_synth_RsuA"/>
    <property type="match status" value="1"/>
</dbReference>
<dbReference type="CDD" id="cd00165">
    <property type="entry name" value="S4"/>
    <property type="match status" value="1"/>
</dbReference>
<dbReference type="FunFam" id="3.30.70.1560:FF:000001">
    <property type="entry name" value="Pseudouridine synthase"/>
    <property type="match status" value="1"/>
</dbReference>
<dbReference type="FunFam" id="3.30.70.580:FF:000004">
    <property type="entry name" value="Pseudouridine synthase"/>
    <property type="match status" value="1"/>
</dbReference>
<dbReference type="Gene3D" id="3.30.70.1560">
    <property type="entry name" value="Alpha-L RNA-binding motif"/>
    <property type="match status" value="1"/>
</dbReference>
<dbReference type="Gene3D" id="3.30.70.580">
    <property type="entry name" value="Pseudouridine synthase I, catalytic domain, N-terminal subdomain"/>
    <property type="match status" value="1"/>
</dbReference>
<dbReference type="Gene3D" id="3.10.290.10">
    <property type="entry name" value="RNA-binding S4 domain"/>
    <property type="match status" value="1"/>
</dbReference>
<dbReference type="InterPro" id="IPR042092">
    <property type="entry name" value="PsdUridine_s_RsuA/RluB/E/F_cat"/>
</dbReference>
<dbReference type="InterPro" id="IPR020103">
    <property type="entry name" value="PsdUridine_synth_cat_dom_sf"/>
</dbReference>
<dbReference type="InterPro" id="IPR006145">
    <property type="entry name" value="PsdUridine_synth_RsuA/RluA"/>
</dbReference>
<dbReference type="InterPro" id="IPR000748">
    <property type="entry name" value="PsdUridine_synth_RsuA/RluB/E/F"/>
</dbReference>
<dbReference type="InterPro" id="IPR018496">
    <property type="entry name" value="PsdUridine_synth_RsuA/RluB_CS"/>
</dbReference>
<dbReference type="InterPro" id="IPR050343">
    <property type="entry name" value="RsuA_PseudoU_synthase"/>
</dbReference>
<dbReference type="InterPro" id="IPR002942">
    <property type="entry name" value="S4_RNA-bd"/>
</dbReference>
<dbReference type="InterPro" id="IPR036986">
    <property type="entry name" value="S4_RNA-bd_sf"/>
</dbReference>
<dbReference type="InterPro" id="IPR020094">
    <property type="entry name" value="TruA/RsuA/RluB/E/F_N"/>
</dbReference>
<dbReference type="NCBIfam" id="NF008097">
    <property type="entry name" value="PRK10839.1"/>
    <property type="match status" value="1"/>
</dbReference>
<dbReference type="NCBIfam" id="TIGR00093">
    <property type="entry name" value="pseudouridine synthase"/>
    <property type="match status" value="1"/>
</dbReference>
<dbReference type="PANTHER" id="PTHR47683:SF4">
    <property type="entry name" value="PSEUDOURIDINE SYNTHASE"/>
    <property type="match status" value="1"/>
</dbReference>
<dbReference type="PANTHER" id="PTHR47683">
    <property type="entry name" value="PSEUDOURIDINE SYNTHASE FAMILY PROTEIN-RELATED"/>
    <property type="match status" value="1"/>
</dbReference>
<dbReference type="Pfam" id="PF00849">
    <property type="entry name" value="PseudoU_synth_2"/>
    <property type="match status" value="1"/>
</dbReference>
<dbReference type="Pfam" id="PF01479">
    <property type="entry name" value="S4"/>
    <property type="match status" value="1"/>
</dbReference>
<dbReference type="SMART" id="SM00363">
    <property type="entry name" value="S4"/>
    <property type="match status" value="1"/>
</dbReference>
<dbReference type="SUPFAM" id="SSF55174">
    <property type="entry name" value="Alpha-L RNA-binding motif"/>
    <property type="match status" value="1"/>
</dbReference>
<dbReference type="SUPFAM" id="SSF55120">
    <property type="entry name" value="Pseudouridine synthase"/>
    <property type="match status" value="1"/>
</dbReference>
<dbReference type="PROSITE" id="PS01149">
    <property type="entry name" value="PSI_RSU"/>
    <property type="match status" value="1"/>
</dbReference>
<dbReference type="PROSITE" id="PS50889">
    <property type="entry name" value="S4"/>
    <property type="match status" value="1"/>
</dbReference>
<evidence type="ECO:0000250" key="1"/>
<evidence type="ECO:0000255" key="2">
    <source>
        <dbReference type="PROSITE-ProRule" id="PRU00182"/>
    </source>
</evidence>
<evidence type="ECO:0000305" key="3"/>
<keyword id="KW-0413">Isomerase</keyword>
<keyword id="KW-1185">Reference proteome</keyword>
<keyword id="KW-0694">RNA-binding</keyword>
<keyword id="KW-0698">rRNA processing</keyword>
<reference key="1">
    <citation type="journal article" date="2001" name="Nature">
        <title>Genome sequence of Yersinia pestis, the causative agent of plague.</title>
        <authorList>
            <person name="Parkhill J."/>
            <person name="Wren B.W."/>
            <person name="Thomson N.R."/>
            <person name="Titball R.W."/>
            <person name="Holden M.T.G."/>
            <person name="Prentice M.B."/>
            <person name="Sebaihia M."/>
            <person name="James K.D."/>
            <person name="Churcher C.M."/>
            <person name="Mungall K.L."/>
            <person name="Baker S."/>
            <person name="Basham D."/>
            <person name="Bentley S.D."/>
            <person name="Brooks K."/>
            <person name="Cerdeno-Tarraga A.-M."/>
            <person name="Chillingworth T."/>
            <person name="Cronin A."/>
            <person name="Davies R.M."/>
            <person name="Davis P."/>
            <person name="Dougan G."/>
            <person name="Feltwell T."/>
            <person name="Hamlin N."/>
            <person name="Holroyd S."/>
            <person name="Jagels K."/>
            <person name="Karlyshev A.V."/>
            <person name="Leather S."/>
            <person name="Moule S."/>
            <person name="Oyston P.C.F."/>
            <person name="Quail M.A."/>
            <person name="Rutherford K.M."/>
            <person name="Simmonds M."/>
            <person name="Skelton J."/>
            <person name="Stevens K."/>
            <person name="Whitehead S."/>
            <person name="Barrell B.G."/>
        </authorList>
    </citation>
    <scope>NUCLEOTIDE SEQUENCE [LARGE SCALE GENOMIC DNA]</scope>
    <source>
        <strain>CO-92 / Biovar Orientalis</strain>
    </source>
</reference>
<reference key="2">
    <citation type="journal article" date="2002" name="J. Bacteriol.">
        <title>Genome sequence of Yersinia pestis KIM.</title>
        <authorList>
            <person name="Deng W."/>
            <person name="Burland V."/>
            <person name="Plunkett G. III"/>
            <person name="Boutin A."/>
            <person name="Mayhew G.F."/>
            <person name="Liss P."/>
            <person name="Perna N.T."/>
            <person name="Rose D.J."/>
            <person name="Mau B."/>
            <person name="Zhou S."/>
            <person name="Schwartz D.C."/>
            <person name="Fetherston J.D."/>
            <person name="Lindler L.E."/>
            <person name="Brubaker R.R."/>
            <person name="Plano G.V."/>
            <person name="Straley S.C."/>
            <person name="McDonough K.A."/>
            <person name="Nilles M.L."/>
            <person name="Matson J.S."/>
            <person name="Blattner F.R."/>
            <person name="Perry R.D."/>
        </authorList>
    </citation>
    <scope>NUCLEOTIDE SEQUENCE [LARGE SCALE GENOMIC DNA]</scope>
    <source>
        <strain>KIM10+ / Biovar Mediaevalis</strain>
    </source>
</reference>
<reference key="3">
    <citation type="journal article" date="2004" name="DNA Res.">
        <title>Complete genome sequence of Yersinia pestis strain 91001, an isolate avirulent to humans.</title>
        <authorList>
            <person name="Song Y."/>
            <person name="Tong Z."/>
            <person name="Wang J."/>
            <person name="Wang L."/>
            <person name="Guo Z."/>
            <person name="Han Y."/>
            <person name="Zhang J."/>
            <person name="Pei D."/>
            <person name="Zhou D."/>
            <person name="Qin H."/>
            <person name="Pang X."/>
            <person name="Han Y."/>
            <person name="Zhai J."/>
            <person name="Li M."/>
            <person name="Cui B."/>
            <person name="Qi Z."/>
            <person name="Jin L."/>
            <person name="Dai R."/>
            <person name="Chen F."/>
            <person name="Li S."/>
            <person name="Ye C."/>
            <person name="Du Z."/>
            <person name="Lin W."/>
            <person name="Wang J."/>
            <person name="Yu J."/>
            <person name="Yang H."/>
            <person name="Wang J."/>
            <person name="Huang P."/>
            <person name="Yang R."/>
        </authorList>
    </citation>
    <scope>NUCLEOTIDE SEQUENCE [LARGE SCALE GENOMIC DNA]</scope>
    <source>
        <strain>91001 / Biovar Mediaevalis</strain>
    </source>
</reference>
<protein>
    <recommendedName>
        <fullName>Ribosomal small subunit pseudouridine synthase A</fullName>
        <ecNumber>5.4.99.19</ecNumber>
    </recommendedName>
    <alternativeName>
        <fullName>16S pseudouridylate 516 synthase</fullName>
    </alternativeName>
    <alternativeName>
        <fullName>16S rRNA pseudouridine(516) synthase</fullName>
    </alternativeName>
    <alternativeName>
        <fullName>rRNA pseudouridylate synthase A</fullName>
    </alternativeName>
    <alternativeName>
        <fullName>rRNA-uridine isomerase A</fullName>
    </alternativeName>
</protein>
<sequence>MRLDKFLSQQLGVSRALVARELRAKRVTIDGEVVKSGAIKLTPEQDVRFDGNPLQQMVGPRYFMLNKPQGYVCSTEDPDHPTVLYFLDEPVAYKLHAAGRLDIDTTGLVLMTDDGQWSHRVTSPRHHCEKTYLVTLEHPLSDDTAQQFADGVQLYNEKSLTKPAQLDVIEPQRVRLTISEGRYHQVKRMFAAVGNRVIELHRERIGDITLDDDLAPGEYRPLTTEEIASVGAPHL</sequence>